<evidence type="ECO:0000255" key="1">
    <source>
        <dbReference type="HAMAP-Rule" id="MF_00149"/>
    </source>
</evidence>
<evidence type="ECO:0000256" key="2">
    <source>
        <dbReference type="SAM" id="MobiDB-lite"/>
    </source>
</evidence>
<gene>
    <name evidence="1" type="primary">mutL</name>
    <name type="ordered locus">CKO_03665</name>
</gene>
<proteinExistence type="inferred from homology"/>
<organism>
    <name type="scientific">Citrobacter koseri (strain ATCC BAA-895 / CDC 4225-83 / SGSC4696)</name>
    <dbReference type="NCBI Taxonomy" id="290338"/>
    <lineage>
        <taxon>Bacteria</taxon>
        <taxon>Pseudomonadati</taxon>
        <taxon>Pseudomonadota</taxon>
        <taxon>Gammaproteobacteria</taxon>
        <taxon>Enterobacterales</taxon>
        <taxon>Enterobacteriaceae</taxon>
        <taxon>Citrobacter</taxon>
    </lineage>
</organism>
<sequence>MPIQVLPPQLANQIAAGEVVERPASVVKELVENSLDAGATRIDIDIERGGAKLIRIRDNGCGIKKDELALALARHATSKIASLDDLEAIISLGFRGEALASISSVSRLTLTSRTAEQAEAWQAYAEGRDMDVTVKPAAHPVGTTLEVLDLFYNTPARRKFMRTEKTEFNHIDEIIRRIALARFDVTLNLSHNGKMVRQYRAVAQDGQKERRLGALCGAPFLEQALVIEWQHGDLTLRGWVADPHHTTAALAEIQYCYVNGRMMRDRLINHAIRQACEDKLGGDRQPAFVLYLEIDPHQVDVNVHPAKHEVRFHQSRLVHDFIYQGVLSVLQQQLDAPLPLAEEAPAPRHIPENRVAAGRNHFAEPASAREPAAPRYSTSSGATGGRQPAASWPHAQPGYQKQQGEVYRQLLQTPAPRQPALAPEAETAAPSLAGHSQSFGRVLTIVGADCALLERDGNIHLLALPVAERWLRQAQLTPGQTPVCAQPLLIPLRLKVSAEEKSALEKAQTPLTDLGIEFQSDAQHVTIRAVPLPLRQQNLQILIPELIGYLAQQSAFDAGNIAQWIARNLMSEHPQWTMAQAITLLADVERLCPQLVKAPPGGLLQPVDLHSVMNALKHE</sequence>
<protein>
    <recommendedName>
        <fullName evidence="1">DNA mismatch repair protein MutL</fullName>
    </recommendedName>
</protein>
<comment type="function">
    <text evidence="1">This protein is involved in the repair of mismatches in DNA. It is required for dam-dependent methyl-directed DNA mismatch repair. May act as a 'molecular matchmaker', a protein that promotes the formation of a stable complex between two or more DNA-binding proteins in an ATP-dependent manner without itself being part of a final effector complex.</text>
</comment>
<comment type="similarity">
    <text evidence="1">Belongs to the DNA mismatch repair MutL/HexB family.</text>
</comment>
<keyword id="KW-0227">DNA damage</keyword>
<keyword id="KW-0234">DNA repair</keyword>
<keyword id="KW-1185">Reference proteome</keyword>
<reference key="1">
    <citation type="submission" date="2007-08" db="EMBL/GenBank/DDBJ databases">
        <authorList>
            <consortium name="The Citrobacter koseri Genome Sequencing Project"/>
            <person name="McClelland M."/>
            <person name="Sanderson E.K."/>
            <person name="Porwollik S."/>
            <person name="Spieth J."/>
            <person name="Clifton W.S."/>
            <person name="Latreille P."/>
            <person name="Courtney L."/>
            <person name="Wang C."/>
            <person name="Pepin K."/>
            <person name="Bhonagiri V."/>
            <person name="Nash W."/>
            <person name="Johnson M."/>
            <person name="Thiruvilangam P."/>
            <person name="Wilson R."/>
        </authorList>
    </citation>
    <scope>NUCLEOTIDE SEQUENCE [LARGE SCALE GENOMIC DNA]</scope>
    <source>
        <strain>ATCC BAA-895 / CDC 4225-83 / SGSC4696</strain>
    </source>
</reference>
<accession>A8AMN1</accession>
<name>MUTL_CITK8</name>
<dbReference type="EMBL" id="CP000822">
    <property type="protein sequence ID" value="ABV14744.1"/>
    <property type="molecule type" value="Genomic_DNA"/>
</dbReference>
<dbReference type="RefSeq" id="WP_012134441.1">
    <property type="nucleotide sequence ID" value="NC_009792.1"/>
</dbReference>
<dbReference type="SMR" id="A8AMN1"/>
<dbReference type="STRING" id="290338.CKO_03665"/>
<dbReference type="GeneID" id="45137369"/>
<dbReference type="KEGG" id="cko:CKO_03665"/>
<dbReference type="HOGENOM" id="CLU_004131_5_1_6"/>
<dbReference type="OrthoDB" id="9763467at2"/>
<dbReference type="Proteomes" id="UP000008148">
    <property type="component" value="Chromosome"/>
</dbReference>
<dbReference type="GO" id="GO:0032300">
    <property type="term" value="C:mismatch repair complex"/>
    <property type="evidence" value="ECO:0007669"/>
    <property type="project" value="InterPro"/>
</dbReference>
<dbReference type="GO" id="GO:0005524">
    <property type="term" value="F:ATP binding"/>
    <property type="evidence" value="ECO:0007669"/>
    <property type="project" value="InterPro"/>
</dbReference>
<dbReference type="GO" id="GO:0016887">
    <property type="term" value="F:ATP hydrolysis activity"/>
    <property type="evidence" value="ECO:0007669"/>
    <property type="project" value="InterPro"/>
</dbReference>
<dbReference type="GO" id="GO:0140664">
    <property type="term" value="F:ATP-dependent DNA damage sensor activity"/>
    <property type="evidence" value="ECO:0007669"/>
    <property type="project" value="InterPro"/>
</dbReference>
<dbReference type="GO" id="GO:0030983">
    <property type="term" value="F:mismatched DNA binding"/>
    <property type="evidence" value="ECO:0007669"/>
    <property type="project" value="InterPro"/>
</dbReference>
<dbReference type="GO" id="GO:0006298">
    <property type="term" value="P:mismatch repair"/>
    <property type="evidence" value="ECO:0007669"/>
    <property type="project" value="UniProtKB-UniRule"/>
</dbReference>
<dbReference type="CDD" id="cd16926">
    <property type="entry name" value="HATPase_MutL-MLH-PMS-like"/>
    <property type="match status" value="1"/>
</dbReference>
<dbReference type="CDD" id="cd03482">
    <property type="entry name" value="MutL_Trans_MutL"/>
    <property type="match status" value="1"/>
</dbReference>
<dbReference type="FunFam" id="3.30.230.10:FF:000013">
    <property type="entry name" value="DNA mismatch repair endonuclease MutL"/>
    <property type="match status" value="1"/>
</dbReference>
<dbReference type="FunFam" id="3.30.565.10:FF:000003">
    <property type="entry name" value="DNA mismatch repair endonuclease MutL"/>
    <property type="match status" value="1"/>
</dbReference>
<dbReference type="FunFam" id="3.30.1370.100:FF:000002">
    <property type="entry name" value="DNA mismatch repair protein MutL"/>
    <property type="match status" value="1"/>
</dbReference>
<dbReference type="Gene3D" id="3.30.230.10">
    <property type="match status" value="1"/>
</dbReference>
<dbReference type="Gene3D" id="3.30.565.10">
    <property type="entry name" value="Histidine kinase-like ATPase, C-terminal domain"/>
    <property type="match status" value="1"/>
</dbReference>
<dbReference type="Gene3D" id="3.30.1540.20">
    <property type="entry name" value="MutL, C-terminal domain, dimerisation subdomain"/>
    <property type="match status" value="1"/>
</dbReference>
<dbReference type="Gene3D" id="3.30.1370.100">
    <property type="entry name" value="MutL, C-terminal domain, regulatory subdomain"/>
    <property type="match status" value="1"/>
</dbReference>
<dbReference type="HAMAP" id="MF_00149">
    <property type="entry name" value="DNA_mis_repair"/>
    <property type="match status" value="1"/>
</dbReference>
<dbReference type="InterPro" id="IPR014762">
    <property type="entry name" value="DNA_mismatch_repair_CS"/>
</dbReference>
<dbReference type="InterPro" id="IPR020667">
    <property type="entry name" value="DNA_mismatch_repair_MutL"/>
</dbReference>
<dbReference type="InterPro" id="IPR013507">
    <property type="entry name" value="DNA_mismatch_S5_2-like"/>
</dbReference>
<dbReference type="InterPro" id="IPR036890">
    <property type="entry name" value="HATPase_C_sf"/>
</dbReference>
<dbReference type="InterPro" id="IPR002099">
    <property type="entry name" value="MutL/Mlh/PMS"/>
</dbReference>
<dbReference type="InterPro" id="IPR038973">
    <property type="entry name" value="MutL/Mlh/Pms-like"/>
</dbReference>
<dbReference type="InterPro" id="IPR014790">
    <property type="entry name" value="MutL_C"/>
</dbReference>
<dbReference type="InterPro" id="IPR042120">
    <property type="entry name" value="MutL_C_dimsub"/>
</dbReference>
<dbReference type="InterPro" id="IPR042121">
    <property type="entry name" value="MutL_C_regsub"/>
</dbReference>
<dbReference type="InterPro" id="IPR037198">
    <property type="entry name" value="MutL_C_sf"/>
</dbReference>
<dbReference type="InterPro" id="IPR020568">
    <property type="entry name" value="Ribosomal_Su5_D2-typ_SF"/>
</dbReference>
<dbReference type="InterPro" id="IPR014721">
    <property type="entry name" value="Ribsml_uS5_D2-typ_fold_subgr"/>
</dbReference>
<dbReference type="NCBIfam" id="TIGR00585">
    <property type="entry name" value="mutl"/>
    <property type="match status" value="1"/>
</dbReference>
<dbReference type="NCBIfam" id="NF000948">
    <property type="entry name" value="PRK00095.1-1"/>
    <property type="match status" value="1"/>
</dbReference>
<dbReference type="PANTHER" id="PTHR10073">
    <property type="entry name" value="DNA MISMATCH REPAIR PROTEIN MLH, PMS, MUTL"/>
    <property type="match status" value="1"/>
</dbReference>
<dbReference type="PANTHER" id="PTHR10073:SF12">
    <property type="entry name" value="DNA MISMATCH REPAIR PROTEIN MLH1"/>
    <property type="match status" value="1"/>
</dbReference>
<dbReference type="Pfam" id="PF01119">
    <property type="entry name" value="DNA_mis_repair"/>
    <property type="match status" value="1"/>
</dbReference>
<dbReference type="Pfam" id="PF13589">
    <property type="entry name" value="HATPase_c_3"/>
    <property type="match status" value="1"/>
</dbReference>
<dbReference type="Pfam" id="PF08676">
    <property type="entry name" value="MutL_C"/>
    <property type="match status" value="1"/>
</dbReference>
<dbReference type="SMART" id="SM01340">
    <property type="entry name" value="DNA_mis_repair"/>
    <property type="match status" value="1"/>
</dbReference>
<dbReference type="SMART" id="SM00853">
    <property type="entry name" value="MutL_C"/>
    <property type="match status" value="1"/>
</dbReference>
<dbReference type="SUPFAM" id="SSF55874">
    <property type="entry name" value="ATPase domain of HSP90 chaperone/DNA topoisomerase II/histidine kinase"/>
    <property type="match status" value="1"/>
</dbReference>
<dbReference type="SUPFAM" id="SSF118116">
    <property type="entry name" value="DNA mismatch repair protein MutL"/>
    <property type="match status" value="1"/>
</dbReference>
<dbReference type="SUPFAM" id="SSF54211">
    <property type="entry name" value="Ribosomal protein S5 domain 2-like"/>
    <property type="match status" value="1"/>
</dbReference>
<dbReference type="PROSITE" id="PS00058">
    <property type="entry name" value="DNA_MISMATCH_REPAIR_1"/>
    <property type="match status" value="1"/>
</dbReference>
<feature type="chain" id="PRO_1000010004" description="DNA mismatch repair protein MutL">
    <location>
        <begin position="1"/>
        <end position="619"/>
    </location>
</feature>
<feature type="region of interest" description="Disordered" evidence="2">
    <location>
        <begin position="364"/>
        <end position="399"/>
    </location>
</feature>
<feature type="compositionally biased region" description="Low complexity" evidence="2">
    <location>
        <begin position="364"/>
        <end position="375"/>
    </location>
</feature>